<reference key="1">
    <citation type="submission" date="2007-08" db="EMBL/GenBank/DDBJ databases">
        <title>Complete sequence of Shewanella sediminis HAW-EB3.</title>
        <authorList>
            <consortium name="US DOE Joint Genome Institute"/>
            <person name="Copeland A."/>
            <person name="Lucas S."/>
            <person name="Lapidus A."/>
            <person name="Barry K."/>
            <person name="Glavina del Rio T."/>
            <person name="Dalin E."/>
            <person name="Tice H."/>
            <person name="Pitluck S."/>
            <person name="Chertkov O."/>
            <person name="Brettin T."/>
            <person name="Bruce D."/>
            <person name="Detter J.C."/>
            <person name="Han C."/>
            <person name="Schmutz J."/>
            <person name="Larimer F."/>
            <person name="Land M."/>
            <person name="Hauser L."/>
            <person name="Kyrpides N."/>
            <person name="Kim E."/>
            <person name="Zhao J.-S."/>
            <person name="Richardson P."/>
        </authorList>
    </citation>
    <scope>NUCLEOTIDE SEQUENCE [LARGE SCALE GENOMIC DNA]</scope>
    <source>
        <strain>HAW-EB3</strain>
    </source>
</reference>
<comment type="function">
    <text evidence="1">Catalyzes the interconversion of L-alanine and D-alanine. May also act on other amino acids.</text>
</comment>
<comment type="catalytic activity">
    <reaction evidence="1">
        <text>L-alanine = D-alanine</text>
        <dbReference type="Rhea" id="RHEA:20249"/>
        <dbReference type="ChEBI" id="CHEBI:57416"/>
        <dbReference type="ChEBI" id="CHEBI:57972"/>
        <dbReference type="EC" id="5.1.1.1"/>
    </reaction>
</comment>
<comment type="cofactor">
    <cofactor evidence="1">
        <name>pyridoxal 5'-phosphate</name>
        <dbReference type="ChEBI" id="CHEBI:597326"/>
    </cofactor>
</comment>
<comment type="pathway">
    <text evidence="1">Amino-acid biosynthesis; D-alanine biosynthesis; D-alanine from L-alanine: step 1/1.</text>
</comment>
<comment type="similarity">
    <text evidence="1">Belongs to the alanine racemase family.</text>
</comment>
<sequence>MKPFPRAEISSKALQNNLARLREIAPGSKVMAVVKANGYGHGLLNVAHCLDNADGFGLARPEEALALREGGVKSKLILLEGFFSQVDLTTLVEHDIDTVVHNEVQLELLESSILAKPATVWLKIDSGMHRLGFTPEQFAAVYARLEACPQVAKPINLMSHFACADEPDNPSTKVQINLFNDLIKDLPGQRSLANSAGTLYWPESQADWIRPGIALYGVSPVIGDLGGNHGLMPAMELVSQLIAVRDHKAGEPVGYGSSWYAKEDTKLGVVAIGYGDGYPRNAPEGTPVWVNGRRVPIVGRVSMDMLTVDLGINATDLIGDDAILWGKALPVEEVAEHIGTIAYELVTKLTPRVAVCLD</sequence>
<keyword id="KW-0413">Isomerase</keyword>
<keyword id="KW-0663">Pyridoxal phosphate</keyword>
<keyword id="KW-1185">Reference proteome</keyword>
<evidence type="ECO:0000255" key="1">
    <source>
        <dbReference type="HAMAP-Rule" id="MF_01201"/>
    </source>
</evidence>
<gene>
    <name type="primary">alr</name>
    <name type="ordered locus">Ssed_0763</name>
</gene>
<organism>
    <name type="scientific">Shewanella sediminis (strain HAW-EB3)</name>
    <dbReference type="NCBI Taxonomy" id="425104"/>
    <lineage>
        <taxon>Bacteria</taxon>
        <taxon>Pseudomonadati</taxon>
        <taxon>Pseudomonadota</taxon>
        <taxon>Gammaproteobacteria</taxon>
        <taxon>Alteromonadales</taxon>
        <taxon>Shewanellaceae</taxon>
        <taxon>Shewanella</taxon>
    </lineage>
</organism>
<proteinExistence type="inferred from homology"/>
<accession>A8FRA1</accession>
<feature type="chain" id="PRO_1000164621" description="Alanine racemase">
    <location>
        <begin position="1"/>
        <end position="358"/>
    </location>
</feature>
<feature type="active site" description="Proton acceptor; specific for D-alanine" evidence="1">
    <location>
        <position position="35"/>
    </location>
</feature>
<feature type="active site" description="Proton acceptor; specific for L-alanine" evidence="1">
    <location>
        <position position="255"/>
    </location>
</feature>
<feature type="binding site" evidence="1">
    <location>
        <position position="130"/>
    </location>
    <ligand>
        <name>substrate</name>
    </ligand>
</feature>
<feature type="binding site" evidence="1">
    <location>
        <position position="303"/>
    </location>
    <ligand>
        <name>substrate</name>
    </ligand>
</feature>
<feature type="modified residue" description="N6-(pyridoxal phosphate)lysine" evidence="1">
    <location>
        <position position="35"/>
    </location>
</feature>
<dbReference type="EC" id="5.1.1.1" evidence="1"/>
<dbReference type="EMBL" id="CP000821">
    <property type="protein sequence ID" value="ABV35374.1"/>
    <property type="molecule type" value="Genomic_DNA"/>
</dbReference>
<dbReference type="RefSeq" id="WP_012141110.1">
    <property type="nucleotide sequence ID" value="NC_009831.1"/>
</dbReference>
<dbReference type="SMR" id="A8FRA1"/>
<dbReference type="STRING" id="425104.Ssed_0763"/>
<dbReference type="KEGG" id="sse:Ssed_0763"/>
<dbReference type="eggNOG" id="COG0787">
    <property type="taxonomic scope" value="Bacteria"/>
</dbReference>
<dbReference type="HOGENOM" id="CLU_028393_1_0_6"/>
<dbReference type="OrthoDB" id="9813814at2"/>
<dbReference type="UniPathway" id="UPA00042">
    <property type="reaction ID" value="UER00497"/>
</dbReference>
<dbReference type="Proteomes" id="UP000002015">
    <property type="component" value="Chromosome"/>
</dbReference>
<dbReference type="GO" id="GO:0005829">
    <property type="term" value="C:cytosol"/>
    <property type="evidence" value="ECO:0007669"/>
    <property type="project" value="TreeGrafter"/>
</dbReference>
<dbReference type="GO" id="GO:0008784">
    <property type="term" value="F:alanine racemase activity"/>
    <property type="evidence" value="ECO:0007669"/>
    <property type="project" value="UniProtKB-UniRule"/>
</dbReference>
<dbReference type="GO" id="GO:0030170">
    <property type="term" value="F:pyridoxal phosphate binding"/>
    <property type="evidence" value="ECO:0007669"/>
    <property type="project" value="UniProtKB-UniRule"/>
</dbReference>
<dbReference type="GO" id="GO:0030632">
    <property type="term" value="P:D-alanine biosynthetic process"/>
    <property type="evidence" value="ECO:0007669"/>
    <property type="project" value="UniProtKB-UniRule"/>
</dbReference>
<dbReference type="CDD" id="cd06827">
    <property type="entry name" value="PLPDE_III_AR_proteobact"/>
    <property type="match status" value="1"/>
</dbReference>
<dbReference type="FunFam" id="2.40.37.10:FF:000002">
    <property type="entry name" value="Alanine racemase"/>
    <property type="match status" value="1"/>
</dbReference>
<dbReference type="FunFam" id="3.20.20.10:FF:000002">
    <property type="entry name" value="Alanine racemase"/>
    <property type="match status" value="1"/>
</dbReference>
<dbReference type="Gene3D" id="3.20.20.10">
    <property type="entry name" value="Alanine racemase"/>
    <property type="match status" value="1"/>
</dbReference>
<dbReference type="Gene3D" id="2.40.37.10">
    <property type="entry name" value="Lyase, Ornithine Decarboxylase, Chain A, domain 1"/>
    <property type="match status" value="1"/>
</dbReference>
<dbReference type="HAMAP" id="MF_01201">
    <property type="entry name" value="Ala_racemase"/>
    <property type="match status" value="1"/>
</dbReference>
<dbReference type="InterPro" id="IPR000821">
    <property type="entry name" value="Ala_racemase"/>
</dbReference>
<dbReference type="InterPro" id="IPR009006">
    <property type="entry name" value="Ala_racemase/Decarboxylase_C"/>
</dbReference>
<dbReference type="InterPro" id="IPR011079">
    <property type="entry name" value="Ala_racemase_C"/>
</dbReference>
<dbReference type="InterPro" id="IPR001608">
    <property type="entry name" value="Ala_racemase_N"/>
</dbReference>
<dbReference type="InterPro" id="IPR020622">
    <property type="entry name" value="Ala_racemase_pyridoxalP-BS"/>
</dbReference>
<dbReference type="InterPro" id="IPR029066">
    <property type="entry name" value="PLP-binding_barrel"/>
</dbReference>
<dbReference type="NCBIfam" id="TIGR00492">
    <property type="entry name" value="alr"/>
    <property type="match status" value="1"/>
</dbReference>
<dbReference type="PANTHER" id="PTHR30511">
    <property type="entry name" value="ALANINE RACEMASE"/>
    <property type="match status" value="1"/>
</dbReference>
<dbReference type="PANTHER" id="PTHR30511:SF4">
    <property type="entry name" value="ALANINE RACEMASE, BIOSYNTHETIC"/>
    <property type="match status" value="1"/>
</dbReference>
<dbReference type="Pfam" id="PF00842">
    <property type="entry name" value="Ala_racemase_C"/>
    <property type="match status" value="1"/>
</dbReference>
<dbReference type="Pfam" id="PF01168">
    <property type="entry name" value="Ala_racemase_N"/>
    <property type="match status" value="1"/>
</dbReference>
<dbReference type="PRINTS" id="PR00992">
    <property type="entry name" value="ALARACEMASE"/>
</dbReference>
<dbReference type="SMART" id="SM01005">
    <property type="entry name" value="Ala_racemase_C"/>
    <property type="match status" value="1"/>
</dbReference>
<dbReference type="SUPFAM" id="SSF50621">
    <property type="entry name" value="Alanine racemase C-terminal domain-like"/>
    <property type="match status" value="1"/>
</dbReference>
<dbReference type="SUPFAM" id="SSF51419">
    <property type="entry name" value="PLP-binding barrel"/>
    <property type="match status" value="1"/>
</dbReference>
<dbReference type="PROSITE" id="PS00395">
    <property type="entry name" value="ALANINE_RACEMASE"/>
    <property type="match status" value="1"/>
</dbReference>
<name>ALR_SHESH</name>
<protein>
    <recommendedName>
        <fullName evidence="1">Alanine racemase</fullName>
        <ecNumber evidence="1">5.1.1.1</ecNumber>
    </recommendedName>
</protein>